<comment type="function">
    <text evidence="1">Protamines substitute for histones in the chromatin of sperm during the haploid phase of spermatogenesis. They compact sperm DNA into a highly condensed, stable and inactive complex (By similarity).</text>
</comment>
<comment type="subcellular location">
    <subcellularLocation>
        <location evidence="1">Nucleus</location>
    </subcellularLocation>
    <subcellularLocation>
        <location evidence="1">Chromosome</location>
    </subcellularLocation>
</comment>
<comment type="tissue specificity">
    <text>Testis.</text>
</comment>
<comment type="similarity">
    <text evidence="2">Belongs to the protamine P1 family.</text>
</comment>
<accession>Q8WNZ0</accession>
<evidence type="ECO:0000250" key="1"/>
<evidence type="ECO:0000305" key="2"/>
<name>HSP1_CORTO</name>
<dbReference type="EMBL" id="AF435940">
    <property type="protein sequence ID" value="AAL35574.1"/>
    <property type="molecule type" value="Genomic_DNA"/>
</dbReference>
<dbReference type="GO" id="GO:0000786">
    <property type="term" value="C:nucleosome"/>
    <property type="evidence" value="ECO:0007669"/>
    <property type="project" value="UniProtKB-KW"/>
</dbReference>
<dbReference type="GO" id="GO:0005634">
    <property type="term" value="C:nucleus"/>
    <property type="evidence" value="ECO:0007669"/>
    <property type="project" value="UniProtKB-SubCell"/>
</dbReference>
<dbReference type="GO" id="GO:0003677">
    <property type="term" value="F:DNA binding"/>
    <property type="evidence" value="ECO:0007669"/>
    <property type="project" value="UniProtKB-KW"/>
</dbReference>
<dbReference type="GO" id="GO:0030261">
    <property type="term" value="P:chromosome condensation"/>
    <property type="evidence" value="ECO:0007669"/>
    <property type="project" value="UniProtKB-KW"/>
</dbReference>
<dbReference type="GO" id="GO:0035092">
    <property type="term" value="P:sperm DNA condensation"/>
    <property type="evidence" value="ECO:0007669"/>
    <property type="project" value="InterPro"/>
</dbReference>
<dbReference type="InterPro" id="IPR000221">
    <property type="entry name" value="Protamine_P1"/>
</dbReference>
<dbReference type="Pfam" id="PF00260">
    <property type="entry name" value="Protamine_P1"/>
    <property type="match status" value="1"/>
</dbReference>
<dbReference type="PROSITE" id="PS00048">
    <property type="entry name" value="PROTAMINE_P1"/>
    <property type="match status" value="1"/>
</dbReference>
<gene>
    <name type="primary">PRM1</name>
</gene>
<reference key="1">
    <citation type="journal article" date="2002" name="Mol. Phylogenet. Evol.">
        <title>Characterization and phylogenetic utility of the mammalian protamine P1 gene.</title>
        <authorList>
            <person name="Van Den Bussche R.A."/>
            <person name="Hoofer S.R."/>
            <person name="Hansen E.W."/>
        </authorList>
    </citation>
    <scope>NUCLEOTIDE SEQUENCE [GENOMIC DNA]</scope>
</reference>
<feature type="chain" id="PRO_0000191539" description="Sperm protamine P1">
    <location>
        <begin position="1"/>
        <end position="48"/>
    </location>
</feature>
<protein>
    <recommendedName>
        <fullName>Sperm protamine P1</fullName>
    </recommendedName>
</protein>
<keyword id="KW-0158">Chromosome</keyword>
<keyword id="KW-0217">Developmental protein</keyword>
<keyword id="KW-0221">Differentiation</keyword>
<keyword id="KW-0226">DNA condensation</keyword>
<keyword id="KW-0238">DNA-binding</keyword>
<keyword id="KW-0544">Nucleosome core</keyword>
<keyword id="KW-0539">Nucleus</keyword>
<keyword id="KW-0744">Spermatogenesis</keyword>
<sequence length="48" mass="6661">MARYRCCRSQSRSRCRRRRRRCYRRRRRCCRRRRRRVCCRRYTRYRRR</sequence>
<organism>
    <name type="scientific">Corynorhinus townsendii</name>
    <name type="common">Townsend's big-eared bat</name>
    <name type="synonym">Plecotus townsendii</name>
    <dbReference type="NCBI Taxonomy" id="124745"/>
    <lineage>
        <taxon>Eukaryota</taxon>
        <taxon>Metazoa</taxon>
        <taxon>Chordata</taxon>
        <taxon>Craniata</taxon>
        <taxon>Vertebrata</taxon>
        <taxon>Euteleostomi</taxon>
        <taxon>Mammalia</taxon>
        <taxon>Eutheria</taxon>
        <taxon>Laurasiatheria</taxon>
        <taxon>Chiroptera</taxon>
        <taxon>Yangochiroptera</taxon>
        <taxon>Vespertilionidae</taxon>
        <taxon>Corynorhinus</taxon>
    </lineage>
</organism>
<proteinExistence type="evidence at transcript level"/>